<accession>P83736</accession>
<accession>A0A1R3Y0H7</accession>
<accession>Q10391</accession>
<accession>X2BK30</accession>
<protein>
    <recommendedName>
        <fullName evidence="3">Adenosine kinase</fullName>
        <shortName evidence="2">ADK</shortName>
        <shortName evidence="2">AK</shortName>
        <ecNumber evidence="2">2.7.1.20</ecNumber>
    </recommendedName>
</protein>
<feature type="initiator methionine" description="Removed" evidence="1">
    <location>
        <position position="1"/>
    </location>
</feature>
<feature type="chain" id="PRO_0000080063" description="Adenosine kinase">
    <location>
        <begin position="2"/>
        <end position="324"/>
    </location>
</feature>
<feature type="active site" description="Proton acceptor" evidence="2">
    <location>
        <position position="257"/>
    </location>
</feature>
<feature type="binding site" description="in other chain" evidence="5 6">
    <location>
        <position position="8"/>
    </location>
    <ligand>
        <name>substrate</name>
        <note>ligand shared between dimeric partners</note>
    </ligand>
</feature>
<feature type="binding site" description="in other chain" evidence="5 6">
    <location>
        <position position="12"/>
    </location>
    <ligand>
        <name>substrate</name>
        <note>ligand shared between dimeric partners</note>
    </ligand>
</feature>
<feature type="binding site" evidence="5 6">
    <location>
        <position position="36"/>
    </location>
    <ligand>
        <name>substrate</name>
        <note>ligand shared between dimeric partners</note>
    </ligand>
</feature>
<feature type="binding site" description="in other chain" evidence="5 6">
    <location>
        <position position="48"/>
    </location>
    <ligand>
        <name>substrate</name>
        <note>ligand shared between dimeric partners</note>
    </ligand>
</feature>
<feature type="binding site" description="in other chain" evidence="5 6">
    <location>
        <position position="52"/>
    </location>
    <ligand>
        <name>substrate</name>
        <note>ligand shared between dimeric partners</note>
    </ligand>
</feature>
<feature type="binding site" description="in other chain" evidence="5 6">
    <location>
        <position position="102"/>
    </location>
    <ligand>
        <name>substrate</name>
        <note>ligand shared between dimeric partners</note>
    </ligand>
</feature>
<feature type="binding site" description="in other chain" evidence="5 6">
    <location>
        <position position="116"/>
    </location>
    <ligand>
        <name>substrate</name>
        <note>ligand shared between dimeric partners</note>
    </ligand>
</feature>
<feature type="binding site" description="in other chain" evidence="5 6">
    <location>
        <begin position="172"/>
        <end position="173"/>
    </location>
    <ligand>
        <name>substrate</name>
        <note>ligand shared between dimeric partners</note>
    </ligand>
</feature>
<feature type="binding site" evidence="2">
    <location>
        <position position="195"/>
    </location>
    <ligand>
        <name>ATP</name>
        <dbReference type="ChEBI" id="CHEBI:30616"/>
    </ligand>
</feature>
<feature type="binding site" evidence="2">
    <location>
        <begin position="223"/>
        <end position="228"/>
    </location>
    <ligand>
        <name>ATP</name>
        <dbReference type="ChEBI" id="CHEBI:30616"/>
    </ligand>
</feature>
<feature type="binding site" evidence="2">
    <location>
        <position position="256"/>
    </location>
    <ligand>
        <name>ATP</name>
        <dbReference type="ChEBI" id="CHEBI:30616"/>
    </ligand>
</feature>
<feature type="binding site" description="in other chain" evidence="5 6">
    <location>
        <position position="257"/>
    </location>
    <ligand>
        <name>substrate</name>
        <note>ligand shared between dimeric partners</note>
    </ligand>
</feature>
<feature type="strand" evidence="7">
    <location>
        <begin position="3"/>
        <end position="7"/>
    </location>
</feature>
<feature type="strand" evidence="7">
    <location>
        <begin position="10"/>
        <end position="16"/>
    </location>
</feature>
<feature type="helix" evidence="7">
    <location>
        <begin position="21"/>
        <end position="24"/>
    </location>
</feature>
<feature type="helix" evidence="7">
    <location>
        <begin position="27"/>
        <end position="32"/>
    </location>
</feature>
<feature type="strand" evidence="7">
    <location>
        <begin position="40"/>
        <end position="47"/>
    </location>
</feature>
<feature type="helix" evidence="7">
    <location>
        <begin position="49"/>
        <end position="59"/>
    </location>
</feature>
<feature type="strand" evidence="7">
    <location>
        <begin position="64"/>
        <end position="67"/>
    </location>
</feature>
<feature type="helix" evidence="7">
    <location>
        <begin position="74"/>
        <end position="82"/>
    </location>
</feature>
<feature type="turn" evidence="7">
    <location>
        <begin position="83"/>
        <end position="85"/>
    </location>
</feature>
<feature type="strand" evidence="7">
    <location>
        <begin position="100"/>
        <end position="106"/>
    </location>
</feature>
<feature type="strand" evidence="7">
    <location>
        <begin position="112"/>
        <end position="117"/>
    </location>
</feature>
<feature type="helix" evidence="7">
    <location>
        <begin position="119"/>
        <end position="126"/>
    </location>
</feature>
<feature type="helix" evidence="7">
    <location>
        <begin position="129"/>
        <end position="136"/>
    </location>
</feature>
<feature type="strand" evidence="7">
    <location>
        <begin position="140"/>
        <end position="146"/>
    </location>
</feature>
<feature type="helix" evidence="7">
    <location>
        <begin position="149"/>
        <end position="162"/>
    </location>
</feature>
<feature type="strand" evidence="7">
    <location>
        <begin position="166"/>
        <end position="169"/>
    </location>
</feature>
<feature type="helix" evidence="7">
    <location>
        <begin position="171"/>
        <end position="173"/>
    </location>
</feature>
<feature type="turn" evidence="7">
    <location>
        <begin position="174"/>
        <end position="176"/>
    </location>
</feature>
<feature type="helix" evidence="7">
    <location>
        <begin position="179"/>
        <end position="183"/>
    </location>
</feature>
<feature type="turn" evidence="7">
    <location>
        <begin position="184"/>
        <end position="188"/>
    </location>
</feature>
<feature type="strand" evidence="7">
    <location>
        <begin position="190"/>
        <end position="195"/>
    </location>
</feature>
<feature type="helix" evidence="7">
    <location>
        <begin position="196"/>
        <end position="206"/>
    </location>
</feature>
<feature type="helix" evidence="7">
    <location>
        <begin position="210"/>
        <end position="214"/>
    </location>
</feature>
<feature type="strand" evidence="7">
    <location>
        <begin position="220"/>
        <end position="223"/>
    </location>
</feature>
<feature type="helix" evidence="7">
    <location>
        <begin position="225"/>
        <end position="227"/>
    </location>
</feature>
<feature type="strand" evidence="7">
    <location>
        <begin position="229"/>
        <end position="232"/>
    </location>
</feature>
<feature type="strand" evidence="7">
    <location>
        <begin position="238"/>
        <end position="241"/>
    </location>
</feature>
<feature type="helix" evidence="7">
    <location>
        <begin position="255"/>
        <end position="268"/>
    </location>
</feature>
<feature type="helix" evidence="7">
    <location>
        <begin position="273"/>
        <end position="288"/>
    </location>
</feature>
<feature type="strand" evidence="7">
    <location>
        <begin position="290"/>
        <end position="294"/>
    </location>
</feature>
<feature type="helix" evidence="7">
    <location>
        <begin position="300"/>
        <end position="311"/>
    </location>
</feature>
<feature type="helix" evidence="7">
    <location>
        <begin position="313"/>
        <end position="322"/>
    </location>
</feature>
<organism>
    <name type="scientific">Mycobacterium bovis (strain ATCC BAA-935 / AF2122/97)</name>
    <dbReference type="NCBI Taxonomy" id="233413"/>
    <lineage>
        <taxon>Bacteria</taxon>
        <taxon>Bacillati</taxon>
        <taxon>Actinomycetota</taxon>
        <taxon>Actinomycetes</taxon>
        <taxon>Mycobacteriales</taxon>
        <taxon>Mycobacteriaceae</taxon>
        <taxon>Mycobacterium</taxon>
        <taxon>Mycobacterium tuberculosis complex</taxon>
    </lineage>
</organism>
<comment type="function">
    <text evidence="2">Catalyzes the phosphorylation of adenosine to adenosine monophosphate (AMP). Prefers dGTP and GTP to ATP as phosphate donors in vitro.</text>
</comment>
<comment type="catalytic activity">
    <reaction evidence="2">
        <text>adenosine + ATP = AMP + ADP + H(+)</text>
        <dbReference type="Rhea" id="RHEA:20824"/>
        <dbReference type="ChEBI" id="CHEBI:15378"/>
        <dbReference type="ChEBI" id="CHEBI:16335"/>
        <dbReference type="ChEBI" id="CHEBI:30616"/>
        <dbReference type="ChEBI" id="CHEBI:456215"/>
        <dbReference type="ChEBI" id="CHEBI:456216"/>
        <dbReference type="EC" id="2.7.1.20"/>
    </reaction>
</comment>
<comment type="catalytic activity">
    <reaction evidence="2">
        <text>adenosine + GTP = GDP + AMP + H(+)</text>
        <dbReference type="Rhea" id="RHEA:52532"/>
        <dbReference type="ChEBI" id="CHEBI:15378"/>
        <dbReference type="ChEBI" id="CHEBI:16335"/>
        <dbReference type="ChEBI" id="CHEBI:37565"/>
        <dbReference type="ChEBI" id="CHEBI:58189"/>
        <dbReference type="ChEBI" id="CHEBI:456215"/>
    </reaction>
</comment>
<comment type="catalytic activity">
    <reaction evidence="2">
        <text>dGTP + adenosine = dGDP + AMP + H(+)</text>
        <dbReference type="Rhea" id="RHEA:52536"/>
        <dbReference type="ChEBI" id="CHEBI:15378"/>
        <dbReference type="ChEBI" id="CHEBI:16335"/>
        <dbReference type="ChEBI" id="CHEBI:58595"/>
        <dbReference type="ChEBI" id="CHEBI:61429"/>
        <dbReference type="ChEBI" id="CHEBI:456215"/>
    </reaction>
</comment>
<comment type="cofactor">
    <cofactor evidence="2">
        <name>Mg(2+)</name>
        <dbReference type="ChEBI" id="CHEBI:18420"/>
    </cofactor>
</comment>
<comment type="pathway">
    <text evidence="2">Purine metabolism; AMP biosynthesis via salvage pathway; AMP from adenosine: step 1/1.</text>
</comment>
<comment type="subunit">
    <text evidence="2">Homodimer.</text>
</comment>
<comment type="similarity">
    <text evidence="4">Belongs to the carbohydrate kinase PfkB family.</text>
</comment>
<gene>
    <name type="primary">adoK</name>
    <name type="synonym">cbhK</name>
    <name type="ordered locus">BQ2027_MB2225C</name>
</gene>
<keyword id="KW-0002">3D-structure</keyword>
<keyword id="KW-0067">ATP-binding</keyword>
<keyword id="KW-0418">Kinase</keyword>
<keyword id="KW-0460">Magnesium</keyword>
<keyword id="KW-0547">Nucleotide-binding</keyword>
<keyword id="KW-0660">Purine salvage</keyword>
<keyword id="KW-1185">Reference proteome</keyword>
<keyword id="KW-0808">Transferase</keyword>
<reference key="1">
    <citation type="journal article" date="2003" name="Proc. Natl. Acad. Sci. U.S.A.">
        <title>The complete genome sequence of Mycobacterium bovis.</title>
        <authorList>
            <person name="Garnier T."/>
            <person name="Eiglmeier K."/>
            <person name="Camus J.-C."/>
            <person name="Medina N."/>
            <person name="Mansoor H."/>
            <person name="Pryor M."/>
            <person name="Duthoy S."/>
            <person name="Grondin S."/>
            <person name="Lacroix C."/>
            <person name="Monsempe C."/>
            <person name="Simon S."/>
            <person name="Harris B."/>
            <person name="Atkin R."/>
            <person name="Doggett J."/>
            <person name="Mayes R."/>
            <person name="Keating L."/>
            <person name="Wheeler P.R."/>
            <person name="Parkhill J."/>
            <person name="Barrell B.G."/>
            <person name="Cole S.T."/>
            <person name="Gordon S.V."/>
            <person name="Hewinson R.G."/>
        </authorList>
    </citation>
    <scope>NUCLEOTIDE SEQUENCE [LARGE SCALE GENOMIC DNA]</scope>
    <source>
        <strain>ATCC BAA-935 / AF2122/97</strain>
    </source>
</reference>
<reference key="2">
    <citation type="journal article" date="2017" name="Genome Announc.">
        <title>Updated reference genome sequence and annotation of Mycobacterium bovis AF2122/97.</title>
        <authorList>
            <person name="Malone K.M."/>
            <person name="Farrell D."/>
            <person name="Stuber T.P."/>
            <person name="Schubert O.T."/>
            <person name="Aebersold R."/>
            <person name="Robbe-Austerman S."/>
            <person name="Gordon S.V."/>
        </authorList>
    </citation>
    <scope>NUCLEOTIDE SEQUENCE [LARGE SCALE GENOMIC DNA]</scope>
    <scope>GENOME REANNOTATION</scope>
    <source>
        <strain>ATCC BAA-935 / AF2122/97</strain>
    </source>
</reference>
<reference key="3">
    <citation type="submission" date="2014-08" db="PDB data bank">
        <title>Crystal structure of M.tuberculosis adenosine kinase complexed with 2-fluoro-adenosine.</title>
        <authorList>
            <person name="Reddy M.C.M."/>
            <person name="Palaninathan S.K."/>
            <person name="Shetty N.D."/>
            <person name="Owen J.L."/>
            <person name="Watson M.D."/>
            <person name="Sacchettini J.C."/>
        </authorList>
    </citation>
    <scope>X-RAY CRYSTALLOGRAPHY (1.93 ANGSTROMS) IN COMPLEX WITH 2-FLUOROADENOSINE</scope>
    <source>
        <strain>ATCC BAA-935 / AF2122/97</strain>
    </source>
</reference>
<sequence>MTIAVTGSIATDHLMRFPGRFSEQLLPEHLHKVSLSFLVDDLVMHRGGVAGNMAFAIGVLGGEVALVGAAGADFADYRDWLKARGVNCDHVLISETAHTARFTCTTDVDMAQIASFYPGAMSEARNIKLADVVSAIGKPELVIIGANDPEAMFLHTEECRKLGLAFAADPSQQLARLSGEEIRRLVNGAAYLFTNDYEWDLLLSKTGWSEADVMAQIDLRVTTLGPKGVDLVEPDGTTIHVGVVPETSQTDPTGVGDAFRAGFLTGRSAGLGLERSAQLGSLVAVLVLESTGTQEWQWDYEAAASRLAGAYGEHAAAEIVAVLA</sequence>
<proteinExistence type="evidence at protein level"/>
<evidence type="ECO:0000250" key="1"/>
<evidence type="ECO:0000250" key="2">
    <source>
        <dbReference type="UniProtKB" id="P9WID5"/>
    </source>
</evidence>
<evidence type="ECO:0000303" key="3">
    <source ref="3"/>
</evidence>
<evidence type="ECO:0000305" key="4"/>
<evidence type="ECO:0000305" key="5">
    <source ref="3"/>
</evidence>
<evidence type="ECO:0007744" key="6">
    <source>
        <dbReference type="PDB" id="4UBE"/>
    </source>
</evidence>
<evidence type="ECO:0007829" key="7">
    <source>
        <dbReference type="PDB" id="4UBE"/>
    </source>
</evidence>
<dbReference type="EC" id="2.7.1.20" evidence="2"/>
<dbReference type="EMBL" id="LT708304">
    <property type="protein sequence ID" value="SIU00833.1"/>
    <property type="molecule type" value="Genomic_DNA"/>
</dbReference>
<dbReference type="RefSeq" id="NP_855874.1">
    <property type="nucleotide sequence ID" value="NC_002945.3"/>
</dbReference>
<dbReference type="RefSeq" id="WP_003411414.1">
    <property type="nucleotide sequence ID" value="NC_002945.4"/>
</dbReference>
<dbReference type="PDB" id="4UBE">
    <property type="method" value="X-ray"/>
    <property type="resolution" value="1.93 A"/>
    <property type="chains" value="A=1-324"/>
</dbReference>
<dbReference type="PDBsum" id="4UBE"/>
<dbReference type="SMR" id="P83736"/>
<dbReference type="KEGG" id="mbo:BQ2027_MB2225C"/>
<dbReference type="PATRIC" id="fig|233413.5.peg.2441"/>
<dbReference type="UniPathway" id="UPA00588">
    <property type="reaction ID" value="UER00659"/>
</dbReference>
<dbReference type="EvolutionaryTrace" id="P83736"/>
<dbReference type="Proteomes" id="UP000001419">
    <property type="component" value="Chromosome"/>
</dbReference>
<dbReference type="GO" id="GO:0004001">
    <property type="term" value="F:adenosine kinase activity"/>
    <property type="evidence" value="ECO:0007669"/>
    <property type="project" value="UniProtKB-EC"/>
</dbReference>
<dbReference type="GO" id="GO:0005524">
    <property type="term" value="F:ATP binding"/>
    <property type="evidence" value="ECO:0007669"/>
    <property type="project" value="UniProtKB-KW"/>
</dbReference>
<dbReference type="GO" id="GO:0044209">
    <property type="term" value="P:AMP salvage"/>
    <property type="evidence" value="ECO:0007669"/>
    <property type="project" value="UniProtKB-UniPathway"/>
</dbReference>
<dbReference type="GO" id="GO:0006166">
    <property type="term" value="P:purine ribonucleoside salvage"/>
    <property type="evidence" value="ECO:0007669"/>
    <property type="project" value="UniProtKB-KW"/>
</dbReference>
<dbReference type="CDD" id="cd01942">
    <property type="entry name" value="ribokinase_group_A"/>
    <property type="match status" value="1"/>
</dbReference>
<dbReference type="FunFam" id="3.40.1190.20:FF:000046">
    <property type="entry name" value="Adenosine kinase"/>
    <property type="match status" value="1"/>
</dbReference>
<dbReference type="Gene3D" id="3.40.1190.20">
    <property type="match status" value="1"/>
</dbReference>
<dbReference type="InterPro" id="IPR002173">
    <property type="entry name" value="Carboh/pur_kinase_PfkB_CS"/>
</dbReference>
<dbReference type="InterPro" id="IPR050306">
    <property type="entry name" value="PfkB_Carbo_kinase"/>
</dbReference>
<dbReference type="InterPro" id="IPR011611">
    <property type="entry name" value="PfkB_dom"/>
</dbReference>
<dbReference type="InterPro" id="IPR029056">
    <property type="entry name" value="Ribokinase-like"/>
</dbReference>
<dbReference type="PANTHER" id="PTHR43085:SF46">
    <property type="entry name" value="ADENOSINE KINASE"/>
    <property type="match status" value="1"/>
</dbReference>
<dbReference type="PANTHER" id="PTHR43085">
    <property type="entry name" value="HEXOKINASE FAMILY MEMBER"/>
    <property type="match status" value="1"/>
</dbReference>
<dbReference type="Pfam" id="PF00294">
    <property type="entry name" value="PfkB"/>
    <property type="match status" value="1"/>
</dbReference>
<dbReference type="SUPFAM" id="SSF53613">
    <property type="entry name" value="Ribokinase-like"/>
    <property type="match status" value="1"/>
</dbReference>
<dbReference type="PROSITE" id="PS00583">
    <property type="entry name" value="PFKB_KINASES_1"/>
    <property type="match status" value="1"/>
</dbReference>
<name>ADOK_MYCBO</name>